<protein>
    <recommendedName>
        <fullName>Putative packaging signal terminase</fullName>
    </recommendedName>
    <alternativeName>
        <fullName>PAC site terminase</fullName>
    </alternativeName>
</protein>
<accession>P10590</accession>
<dbReference type="EMBL" id="X12375">
    <property type="protein sequence ID" value="CAA30936.1"/>
    <property type="molecule type" value="Genomic_DNA"/>
</dbReference>
<dbReference type="PIR" id="S03174">
    <property type="entry name" value="S03174"/>
</dbReference>
<dbReference type="GO" id="GO:0003677">
    <property type="term" value="F:DNA binding"/>
    <property type="evidence" value="ECO:0007669"/>
    <property type="project" value="UniProtKB-KW"/>
</dbReference>
<dbReference type="GO" id="GO:0004518">
    <property type="term" value="F:nuclease activity"/>
    <property type="evidence" value="ECO:0007669"/>
    <property type="project" value="UniProtKB-KW"/>
</dbReference>
<sequence length="110" mass="12260">MRRAKLDKNATSNAVAYCSATGRHNLSATHASRLAFSVFSHPNVKAFLKSMEKETIDDMIMGRDELLSELTDIASTTIDDIVQIVHSSDNMMNVKRGRFIQDLSRSLLTT</sequence>
<proteinExistence type="predicted"/>
<organism>
    <name type="scientific">Vibrio phage CP-T1</name>
    <name type="common">Bacteriophage CP-T1</name>
    <dbReference type="NCBI Taxonomy" id="10689"/>
    <lineage>
        <taxon>Viruses</taxon>
        <taxon>Duplodnaviria</taxon>
        <taxon>Heunggongvirae</taxon>
        <taxon>Uroviricota</taxon>
        <taxon>Caudoviricetes</taxon>
    </lineage>
</organism>
<comment type="function">
    <text>This protein may possess the specific endonuclease activity required for cleavage at the pac site.</text>
</comment>
<organismHost>
    <name type="scientific">Vibrio cholerae</name>
    <dbReference type="NCBI Taxonomy" id="666"/>
</organismHost>
<name>PACK_BPCPT</name>
<evidence type="ECO:0000250" key="1"/>
<keyword id="KW-0238">DNA-binding</keyword>
<keyword id="KW-0378">Hydrolase</keyword>
<keyword id="KW-0540">Nuclease</keyword>
<keyword id="KW-0231">Viral genome packaging</keyword>
<keyword id="KW-1188">Viral release from host cell</keyword>
<feature type="chain" id="PRO_0000165271" description="Putative packaging signal terminase">
    <location>
        <begin position="1"/>
        <end position="110"/>
    </location>
</feature>
<feature type="DNA-binding region" description="H-T-H motif" evidence="1">
    <location>
        <begin position="12"/>
        <end position="31"/>
    </location>
</feature>
<feature type="DNA-binding region" description="H-T-H motif" evidence="1">
    <location>
        <begin position="27"/>
        <end position="46"/>
    </location>
</feature>
<reference key="1">
    <citation type="journal article" date="1988" name="Mol. Gen. Genet.">
        <title>Molecular analysis of the packaging signal in bacteriophage CP-T1 of Vibrio cholerae.</title>
        <authorList>
            <person name="Guidolin A."/>
            <person name="Manning P.A."/>
        </authorList>
    </citation>
    <scope>NUCLEOTIDE SEQUENCE [GENOMIC DNA]</scope>
</reference>